<sequence length="267" mass="30336">MTKKIVLQIAYQGTSYSGWQYQPNALSIQEVLETILKKIAGFRISVISSGRTDAGVHAQGQIAHFHCPDHPHFTDPRQIQKMLNALLPHDIVIHDAVMTDGDFHSRFSAIAKEYRYTLSLLPKPLPHHRLFCFSPRYKLNIARMQEAAQYLVGTHDFASFANLGREYSSTIRTLYTLDLSEQEHLVTVICRGNGFLYKMVRNIVGALLDIGKGKYPPEHLLDMLATKDRRKGPPSAPPYGLSLHHVCYPPPYQWFCKHEHNNSSEGK</sequence>
<reference key="1">
    <citation type="journal article" date="2005" name="Infect. Immun.">
        <title>Comparative genomic analysis of Chlamydia trachomatis oculotropic and genitotropic strains.</title>
        <authorList>
            <person name="Carlson J.H."/>
            <person name="Porcella S.F."/>
            <person name="McClarty G."/>
            <person name="Caldwell H.D."/>
        </authorList>
    </citation>
    <scope>NUCLEOTIDE SEQUENCE [LARGE SCALE GENOMIC DNA]</scope>
    <source>
        <strain>ATCC VR-571B / DSM 19440 / HAR-13</strain>
    </source>
</reference>
<feature type="chain" id="PRO_1000017069" description="tRNA pseudouridine synthase A">
    <location>
        <begin position="1"/>
        <end position="267"/>
    </location>
</feature>
<feature type="active site" description="Nucleophile" evidence="1">
    <location>
        <position position="53"/>
    </location>
</feature>
<feature type="binding site" evidence="1">
    <location>
        <position position="114"/>
    </location>
    <ligand>
        <name>substrate</name>
    </ligand>
</feature>
<keyword id="KW-0413">Isomerase</keyword>
<keyword id="KW-0819">tRNA processing</keyword>
<dbReference type="EC" id="5.4.99.12" evidence="1"/>
<dbReference type="EMBL" id="CP000051">
    <property type="protein sequence ID" value="AAX50737.1"/>
    <property type="molecule type" value="Genomic_DNA"/>
</dbReference>
<dbReference type="RefSeq" id="WP_011324744.1">
    <property type="nucleotide sequence ID" value="NC_007429.1"/>
</dbReference>
<dbReference type="SMR" id="Q3KLN5"/>
<dbReference type="KEGG" id="cta:CTA_0506"/>
<dbReference type="HOGENOM" id="CLU_014673_0_1_0"/>
<dbReference type="Proteomes" id="UP000002532">
    <property type="component" value="Chromosome"/>
</dbReference>
<dbReference type="GO" id="GO:0003723">
    <property type="term" value="F:RNA binding"/>
    <property type="evidence" value="ECO:0007669"/>
    <property type="project" value="InterPro"/>
</dbReference>
<dbReference type="GO" id="GO:0160147">
    <property type="term" value="F:tRNA pseudouridine(38-40) synthase activity"/>
    <property type="evidence" value="ECO:0007669"/>
    <property type="project" value="UniProtKB-EC"/>
</dbReference>
<dbReference type="GO" id="GO:0031119">
    <property type="term" value="P:tRNA pseudouridine synthesis"/>
    <property type="evidence" value="ECO:0007669"/>
    <property type="project" value="UniProtKB-UniRule"/>
</dbReference>
<dbReference type="CDD" id="cd02570">
    <property type="entry name" value="PseudoU_synth_EcTruA"/>
    <property type="match status" value="1"/>
</dbReference>
<dbReference type="FunFam" id="3.30.70.580:FF:000001">
    <property type="entry name" value="tRNA pseudouridine synthase A"/>
    <property type="match status" value="1"/>
</dbReference>
<dbReference type="Gene3D" id="3.30.70.660">
    <property type="entry name" value="Pseudouridine synthase I, catalytic domain, C-terminal subdomain"/>
    <property type="match status" value="1"/>
</dbReference>
<dbReference type="Gene3D" id="3.30.70.580">
    <property type="entry name" value="Pseudouridine synthase I, catalytic domain, N-terminal subdomain"/>
    <property type="match status" value="1"/>
</dbReference>
<dbReference type="HAMAP" id="MF_00171">
    <property type="entry name" value="TruA"/>
    <property type="match status" value="1"/>
</dbReference>
<dbReference type="InterPro" id="IPR020103">
    <property type="entry name" value="PsdUridine_synth_cat_dom_sf"/>
</dbReference>
<dbReference type="InterPro" id="IPR001406">
    <property type="entry name" value="PsdUridine_synth_TruA"/>
</dbReference>
<dbReference type="InterPro" id="IPR020097">
    <property type="entry name" value="PsdUridine_synth_TruA_a/b_dom"/>
</dbReference>
<dbReference type="InterPro" id="IPR020095">
    <property type="entry name" value="PsdUridine_synth_TruA_C"/>
</dbReference>
<dbReference type="InterPro" id="IPR020094">
    <property type="entry name" value="TruA/RsuA/RluB/E/F_N"/>
</dbReference>
<dbReference type="NCBIfam" id="TIGR00071">
    <property type="entry name" value="hisT_truA"/>
    <property type="match status" value="1"/>
</dbReference>
<dbReference type="PANTHER" id="PTHR11142">
    <property type="entry name" value="PSEUDOURIDYLATE SYNTHASE"/>
    <property type="match status" value="1"/>
</dbReference>
<dbReference type="PANTHER" id="PTHR11142:SF0">
    <property type="entry name" value="TRNA PSEUDOURIDINE SYNTHASE-LIKE 1"/>
    <property type="match status" value="1"/>
</dbReference>
<dbReference type="Pfam" id="PF01416">
    <property type="entry name" value="PseudoU_synth_1"/>
    <property type="match status" value="2"/>
</dbReference>
<dbReference type="PIRSF" id="PIRSF001430">
    <property type="entry name" value="tRNA_psdUrid_synth"/>
    <property type="match status" value="1"/>
</dbReference>
<dbReference type="SUPFAM" id="SSF55120">
    <property type="entry name" value="Pseudouridine synthase"/>
    <property type="match status" value="1"/>
</dbReference>
<proteinExistence type="inferred from homology"/>
<name>TRUA_CHLTA</name>
<protein>
    <recommendedName>
        <fullName evidence="1">tRNA pseudouridine synthase A</fullName>
        <ecNumber evidence="1">5.4.99.12</ecNumber>
    </recommendedName>
    <alternativeName>
        <fullName evidence="1">tRNA pseudouridine(38-40) synthase</fullName>
    </alternativeName>
    <alternativeName>
        <fullName evidence="1">tRNA pseudouridylate synthase I</fullName>
    </alternativeName>
    <alternativeName>
        <fullName evidence="1">tRNA-uridine isomerase I</fullName>
    </alternativeName>
</protein>
<comment type="function">
    <text evidence="1">Formation of pseudouridine at positions 38, 39 and 40 in the anticodon stem and loop of transfer RNAs.</text>
</comment>
<comment type="catalytic activity">
    <reaction evidence="1">
        <text>uridine(38/39/40) in tRNA = pseudouridine(38/39/40) in tRNA</text>
        <dbReference type="Rhea" id="RHEA:22376"/>
        <dbReference type="Rhea" id="RHEA-COMP:10085"/>
        <dbReference type="Rhea" id="RHEA-COMP:10087"/>
        <dbReference type="ChEBI" id="CHEBI:65314"/>
        <dbReference type="ChEBI" id="CHEBI:65315"/>
        <dbReference type="EC" id="5.4.99.12"/>
    </reaction>
</comment>
<comment type="subunit">
    <text evidence="1">Homodimer.</text>
</comment>
<comment type="similarity">
    <text evidence="1">Belongs to the tRNA pseudouridine synthase TruA family.</text>
</comment>
<gene>
    <name evidence="1" type="primary">truA</name>
    <name type="ordered locus">CTA_0506</name>
</gene>
<evidence type="ECO:0000255" key="1">
    <source>
        <dbReference type="HAMAP-Rule" id="MF_00171"/>
    </source>
</evidence>
<accession>Q3KLN5</accession>
<organism>
    <name type="scientific">Chlamydia trachomatis serovar A (strain ATCC VR-571B / DSM 19440 / HAR-13)</name>
    <dbReference type="NCBI Taxonomy" id="315277"/>
    <lineage>
        <taxon>Bacteria</taxon>
        <taxon>Pseudomonadati</taxon>
        <taxon>Chlamydiota</taxon>
        <taxon>Chlamydiia</taxon>
        <taxon>Chlamydiales</taxon>
        <taxon>Chlamydiaceae</taxon>
        <taxon>Chlamydia/Chlamydophila group</taxon>
        <taxon>Chlamydia</taxon>
    </lineage>
</organism>